<dbReference type="EMBL" id="DQ424856">
    <property type="protein sequence ID" value="ABE47581.1"/>
    <property type="status" value="ALT_SEQ"/>
    <property type="molecule type" value="Genomic_DNA"/>
</dbReference>
<dbReference type="EMBL" id="DQ424856">
    <property type="protein sequence ID" value="ABE47594.1"/>
    <property type="status" value="ALT_SEQ"/>
    <property type="molecule type" value="Genomic_DNA"/>
</dbReference>
<dbReference type="SMR" id="Q0ZIZ5"/>
<dbReference type="FunCoup" id="Q0ZIZ5">
    <property type="interactions" value="1624"/>
</dbReference>
<dbReference type="STRING" id="29760.Q0ZIZ5"/>
<dbReference type="KEGG" id="vvi:4025012"/>
<dbReference type="KEGG" id="vvi:4025063"/>
<dbReference type="InParanoid" id="Q0ZIZ5"/>
<dbReference type="OrthoDB" id="10249311at2759"/>
<dbReference type="Proteomes" id="UP000009183">
    <property type="component" value="Chloroplast"/>
</dbReference>
<dbReference type="ExpressionAtlas" id="Q0ZIZ5">
    <property type="expression patterns" value="baseline and differential"/>
</dbReference>
<dbReference type="GO" id="GO:0009507">
    <property type="term" value="C:chloroplast"/>
    <property type="evidence" value="ECO:0007669"/>
    <property type="project" value="UniProtKB-SubCell"/>
</dbReference>
<dbReference type="GO" id="GO:0005840">
    <property type="term" value="C:ribosome"/>
    <property type="evidence" value="ECO:0000318"/>
    <property type="project" value="GO_Central"/>
</dbReference>
<dbReference type="GO" id="GO:0015935">
    <property type="term" value="C:small ribosomal subunit"/>
    <property type="evidence" value="ECO:0007669"/>
    <property type="project" value="InterPro"/>
</dbReference>
<dbReference type="GO" id="GO:0019843">
    <property type="term" value="F:rRNA binding"/>
    <property type="evidence" value="ECO:0007669"/>
    <property type="project" value="UniProtKB-UniRule"/>
</dbReference>
<dbReference type="GO" id="GO:0003735">
    <property type="term" value="F:structural constituent of ribosome"/>
    <property type="evidence" value="ECO:0000318"/>
    <property type="project" value="GO_Central"/>
</dbReference>
<dbReference type="GO" id="GO:0006412">
    <property type="term" value="P:translation"/>
    <property type="evidence" value="ECO:0000318"/>
    <property type="project" value="GO_Central"/>
</dbReference>
<dbReference type="CDD" id="cd03368">
    <property type="entry name" value="Ribosomal_S12"/>
    <property type="match status" value="1"/>
</dbReference>
<dbReference type="FunFam" id="2.40.50.140:FF:000008">
    <property type="entry name" value="30S ribosomal protein S12, chloroplastic"/>
    <property type="match status" value="1"/>
</dbReference>
<dbReference type="Gene3D" id="2.40.50.140">
    <property type="entry name" value="Nucleic acid-binding proteins"/>
    <property type="match status" value="1"/>
</dbReference>
<dbReference type="HAMAP" id="MF_00403_B">
    <property type="entry name" value="Ribosomal_uS12_B"/>
    <property type="match status" value="1"/>
</dbReference>
<dbReference type="InterPro" id="IPR012340">
    <property type="entry name" value="NA-bd_OB-fold"/>
</dbReference>
<dbReference type="InterPro" id="IPR006032">
    <property type="entry name" value="Ribosomal_uS12"/>
</dbReference>
<dbReference type="InterPro" id="IPR005679">
    <property type="entry name" value="Ribosomal_uS12_bac"/>
</dbReference>
<dbReference type="NCBIfam" id="TIGR00981">
    <property type="entry name" value="rpsL_bact"/>
    <property type="match status" value="1"/>
</dbReference>
<dbReference type="PANTHER" id="PTHR11652">
    <property type="entry name" value="30S RIBOSOMAL PROTEIN S12 FAMILY MEMBER"/>
    <property type="match status" value="1"/>
</dbReference>
<dbReference type="Pfam" id="PF00164">
    <property type="entry name" value="Ribosom_S12_S23"/>
    <property type="match status" value="1"/>
</dbReference>
<dbReference type="PIRSF" id="PIRSF002133">
    <property type="entry name" value="Ribosomal_S12/S23"/>
    <property type="match status" value="1"/>
</dbReference>
<dbReference type="PRINTS" id="PR01034">
    <property type="entry name" value="RIBOSOMALS12"/>
</dbReference>
<dbReference type="SUPFAM" id="SSF50249">
    <property type="entry name" value="Nucleic acid-binding proteins"/>
    <property type="match status" value="1"/>
</dbReference>
<dbReference type="PROSITE" id="PS00055">
    <property type="entry name" value="RIBOSOMAL_S12"/>
    <property type="match status" value="1"/>
</dbReference>
<accession>Q0ZIZ5</accession>
<comment type="function">
    <text evidence="1">With S4 and S5 plays an important role in translational accuracy. Located at the interface of the 30S and 50S subunits (By similarity).</text>
</comment>
<comment type="subunit">
    <text evidence="1">Part of the 30S ribosomal subunit.</text>
</comment>
<comment type="subcellular location">
    <subcellularLocation>
        <location>Plastid</location>
        <location>Chloroplast</location>
    </subcellularLocation>
</comment>
<comment type="similarity">
    <text evidence="3">Belongs to the universal ribosomal protein uS12 family.</text>
</comment>
<comment type="sequence caution" evidence="3">
    <conflict type="erroneous gene model prediction">
        <sequence resource="EMBL-CDS" id="ABE47581"/>
    </conflict>
</comment>
<comment type="sequence caution" evidence="3">
    <conflict type="erroneous gene model prediction">
        <sequence resource="EMBL-CDS" id="ABE47594"/>
    </conflict>
</comment>
<proteinExistence type="inferred from homology"/>
<reference key="1">
    <citation type="journal article" date="2006" name="BMC Evol. Biol.">
        <title>Phylogenetic analyses of Vitis (Vitaceae) based on complete chloroplast genome sequences: effects of taxon sampling and phylogenetic methods on resolving relationships among rosids.</title>
        <authorList>
            <person name="Jansen R.K."/>
            <person name="Kaittanis C."/>
            <person name="Lee S.-B."/>
            <person name="Saski C."/>
            <person name="Tomkins J."/>
            <person name="Alverson A.J."/>
            <person name="Daniell H."/>
        </authorList>
    </citation>
    <scope>NUCLEOTIDE SEQUENCE [LARGE SCALE GENOMIC DNA]</scope>
    <source>
        <strain>cv. Maxxa</strain>
    </source>
</reference>
<evidence type="ECO:0000250" key="1"/>
<evidence type="ECO:0000255" key="2">
    <source>
        <dbReference type="HAMAP-Rule" id="MF_00403"/>
    </source>
</evidence>
<evidence type="ECO:0000305" key="3"/>
<sequence length="123" mass="13738">MPTIKQLIRNTRQPIRNVTKSPALRGCPQRRGTCTRVYTITPKKPNSALRKVARVRLTSGFEITAYIPGIGHNSQEHSVVLVRGGRVKDLPGVRYHIVRGTLDAVGVKDRQQGRSKYGVKKPK</sequence>
<name>RR12_VITVI</name>
<feature type="chain" id="PRO_0000296081" description="Small ribosomal subunit protein uS12cz/uS12cy">
    <location>
        <begin position="1"/>
        <end position="123"/>
    </location>
</feature>
<keyword id="KW-0150">Chloroplast</keyword>
<keyword id="KW-0934">Plastid</keyword>
<keyword id="KW-1185">Reference proteome</keyword>
<keyword id="KW-0687">Ribonucleoprotein</keyword>
<keyword id="KW-0689">Ribosomal protein</keyword>
<keyword id="KW-0694">RNA-binding</keyword>
<keyword id="KW-0699">rRNA-binding</keyword>
<geneLocation type="chloroplast"/>
<gene>
    <name type="primary">rps12-A</name>
</gene>
<gene>
    <name type="primary">rps12-B</name>
</gene>
<protein>
    <recommendedName>
        <fullName evidence="2">Small ribosomal subunit protein uS12cz/uS12cy</fullName>
    </recommendedName>
    <alternativeName>
        <fullName evidence="3">30S ribosomal protein S12, chloroplastic</fullName>
    </alternativeName>
</protein>
<organism>
    <name type="scientific">Vitis vinifera</name>
    <name type="common">Grape</name>
    <dbReference type="NCBI Taxonomy" id="29760"/>
    <lineage>
        <taxon>Eukaryota</taxon>
        <taxon>Viridiplantae</taxon>
        <taxon>Streptophyta</taxon>
        <taxon>Embryophyta</taxon>
        <taxon>Tracheophyta</taxon>
        <taxon>Spermatophyta</taxon>
        <taxon>Magnoliopsida</taxon>
        <taxon>eudicotyledons</taxon>
        <taxon>Gunneridae</taxon>
        <taxon>Pentapetalae</taxon>
        <taxon>rosids</taxon>
        <taxon>Vitales</taxon>
        <taxon>Vitaceae</taxon>
        <taxon>Viteae</taxon>
        <taxon>Vitis</taxon>
    </lineage>
</organism>